<organism>
    <name type="scientific">Staphylococcus epidermidis (strain ATCC 12228 / FDA PCI 1200)</name>
    <dbReference type="NCBI Taxonomy" id="176280"/>
    <lineage>
        <taxon>Bacteria</taxon>
        <taxon>Bacillati</taxon>
        <taxon>Bacillota</taxon>
        <taxon>Bacilli</taxon>
        <taxon>Bacillales</taxon>
        <taxon>Staphylococcaceae</taxon>
        <taxon>Staphylococcus</taxon>
    </lineage>
</organism>
<reference key="1">
    <citation type="journal article" date="2003" name="Mol. Microbiol.">
        <title>Genome-based analysis of virulence genes in a non-biofilm-forming Staphylococcus epidermidis strain (ATCC 12228).</title>
        <authorList>
            <person name="Zhang Y.-Q."/>
            <person name="Ren S.-X."/>
            <person name="Li H.-L."/>
            <person name="Wang Y.-X."/>
            <person name="Fu G."/>
            <person name="Yang J."/>
            <person name="Qin Z.-Q."/>
            <person name="Miao Y.-G."/>
            <person name="Wang W.-Y."/>
            <person name="Chen R.-S."/>
            <person name="Shen Y."/>
            <person name="Chen Z."/>
            <person name="Yuan Z.-H."/>
            <person name="Zhao G.-P."/>
            <person name="Qu D."/>
            <person name="Danchin A."/>
            <person name="Wen Y.-M."/>
        </authorList>
    </citation>
    <scope>NUCLEOTIDE SEQUENCE [LARGE SCALE GENOMIC DNA]</scope>
    <source>
        <strain>ATCC 12228 / FDA PCI 1200</strain>
    </source>
</reference>
<accession>Q8CPZ7</accession>
<feature type="chain" id="PRO_0000179263" description="UDP-N-acetylenolpyruvoylglucosamine reductase">
    <location>
        <begin position="1"/>
        <end position="306"/>
    </location>
</feature>
<feature type="domain" description="FAD-binding PCMH-type" evidence="1">
    <location>
        <begin position="33"/>
        <end position="197"/>
    </location>
</feature>
<feature type="active site" evidence="1">
    <location>
        <position position="176"/>
    </location>
</feature>
<feature type="active site" description="Proton donor" evidence="1">
    <location>
        <position position="226"/>
    </location>
</feature>
<feature type="active site" evidence="1">
    <location>
        <position position="296"/>
    </location>
</feature>
<name>MURB_STAES</name>
<dbReference type="EC" id="1.3.1.98" evidence="1"/>
<dbReference type="EMBL" id="AE015929">
    <property type="protein sequence ID" value="AAO04117.1"/>
    <property type="status" value="ALT_INIT"/>
    <property type="molecule type" value="Genomic_DNA"/>
</dbReference>
<dbReference type="RefSeq" id="NP_764075.1">
    <property type="nucleotide sequence ID" value="NC_004461.1"/>
</dbReference>
<dbReference type="SMR" id="Q8CPZ7"/>
<dbReference type="KEGG" id="sep:SE_0520"/>
<dbReference type="PATRIC" id="fig|176280.10.peg.492"/>
<dbReference type="eggNOG" id="COG0812">
    <property type="taxonomic scope" value="Bacteria"/>
</dbReference>
<dbReference type="HOGENOM" id="CLU_035304_1_1_9"/>
<dbReference type="OrthoDB" id="9804753at2"/>
<dbReference type="UniPathway" id="UPA00219"/>
<dbReference type="Proteomes" id="UP000001411">
    <property type="component" value="Chromosome"/>
</dbReference>
<dbReference type="GO" id="GO:0005829">
    <property type="term" value="C:cytosol"/>
    <property type="evidence" value="ECO:0007669"/>
    <property type="project" value="TreeGrafter"/>
</dbReference>
<dbReference type="GO" id="GO:0071949">
    <property type="term" value="F:FAD binding"/>
    <property type="evidence" value="ECO:0007669"/>
    <property type="project" value="InterPro"/>
</dbReference>
<dbReference type="GO" id="GO:0008762">
    <property type="term" value="F:UDP-N-acetylmuramate dehydrogenase activity"/>
    <property type="evidence" value="ECO:0007669"/>
    <property type="project" value="UniProtKB-UniRule"/>
</dbReference>
<dbReference type="GO" id="GO:0051301">
    <property type="term" value="P:cell division"/>
    <property type="evidence" value="ECO:0007669"/>
    <property type="project" value="UniProtKB-KW"/>
</dbReference>
<dbReference type="GO" id="GO:0071555">
    <property type="term" value="P:cell wall organization"/>
    <property type="evidence" value="ECO:0007669"/>
    <property type="project" value="UniProtKB-KW"/>
</dbReference>
<dbReference type="GO" id="GO:0009252">
    <property type="term" value="P:peptidoglycan biosynthetic process"/>
    <property type="evidence" value="ECO:0007669"/>
    <property type="project" value="UniProtKB-UniRule"/>
</dbReference>
<dbReference type="GO" id="GO:0008360">
    <property type="term" value="P:regulation of cell shape"/>
    <property type="evidence" value="ECO:0007669"/>
    <property type="project" value="UniProtKB-KW"/>
</dbReference>
<dbReference type="FunFam" id="3.90.78.10:FF:000001">
    <property type="entry name" value="UDP-N-acetylenolpyruvoylglucosamine reductase"/>
    <property type="match status" value="1"/>
</dbReference>
<dbReference type="Gene3D" id="3.30.465.10">
    <property type="match status" value="1"/>
</dbReference>
<dbReference type="Gene3D" id="3.90.78.10">
    <property type="entry name" value="UDP-N-acetylenolpyruvoylglucosamine reductase, C-terminal domain"/>
    <property type="match status" value="1"/>
</dbReference>
<dbReference type="Gene3D" id="3.30.43.10">
    <property type="entry name" value="Uridine Diphospho-n-acetylenolpyruvylglucosamine Reductase, domain 2"/>
    <property type="match status" value="1"/>
</dbReference>
<dbReference type="HAMAP" id="MF_00037">
    <property type="entry name" value="MurB"/>
    <property type="match status" value="1"/>
</dbReference>
<dbReference type="InterPro" id="IPR016166">
    <property type="entry name" value="FAD-bd_PCMH"/>
</dbReference>
<dbReference type="InterPro" id="IPR036318">
    <property type="entry name" value="FAD-bd_PCMH-like_sf"/>
</dbReference>
<dbReference type="InterPro" id="IPR016167">
    <property type="entry name" value="FAD-bd_PCMH_sub1"/>
</dbReference>
<dbReference type="InterPro" id="IPR016169">
    <property type="entry name" value="FAD-bd_PCMH_sub2"/>
</dbReference>
<dbReference type="InterPro" id="IPR003170">
    <property type="entry name" value="MurB"/>
</dbReference>
<dbReference type="InterPro" id="IPR011601">
    <property type="entry name" value="MurB_C"/>
</dbReference>
<dbReference type="InterPro" id="IPR036635">
    <property type="entry name" value="MurB_C_sf"/>
</dbReference>
<dbReference type="InterPro" id="IPR006094">
    <property type="entry name" value="Oxid_FAD_bind_N"/>
</dbReference>
<dbReference type="NCBIfam" id="TIGR00179">
    <property type="entry name" value="murB"/>
    <property type="match status" value="1"/>
</dbReference>
<dbReference type="NCBIfam" id="NF010480">
    <property type="entry name" value="PRK13905.1"/>
    <property type="match status" value="1"/>
</dbReference>
<dbReference type="PANTHER" id="PTHR21071">
    <property type="entry name" value="UDP-N-ACETYLENOLPYRUVOYLGLUCOSAMINE REDUCTASE"/>
    <property type="match status" value="1"/>
</dbReference>
<dbReference type="PANTHER" id="PTHR21071:SF4">
    <property type="entry name" value="UDP-N-ACETYLENOLPYRUVOYLGLUCOSAMINE REDUCTASE"/>
    <property type="match status" value="1"/>
</dbReference>
<dbReference type="Pfam" id="PF01565">
    <property type="entry name" value="FAD_binding_4"/>
    <property type="match status" value="1"/>
</dbReference>
<dbReference type="Pfam" id="PF02873">
    <property type="entry name" value="MurB_C"/>
    <property type="match status" value="1"/>
</dbReference>
<dbReference type="SUPFAM" id="SSF56176">
    <property type="entry name" value="FAD-binding/transporter-associated domain-like"/>
    <property type="match status" value="1"/>
</dbReference>
<dbReference type="SUPFAM" id="SSF56194">
    <property type="entry name" value="Uridine diphospho-N-Acetylenolpyruvylglucosamine reductase, MurB, C-terminal domain"/>
    <property type="match status" value="1"/>
</dbReference>
<dbReference type="PROSITE" id="PS51387">
    <property type="entry name" value="FAD_PCMH"/>
    <property type="match status" value="1"/>
</dbReference>
<keyword id="KW-0131">Cell cycle</keyword>
<keyword id="KW-0132">Cell division</keyword>
<keyword id="KW-0133">Cell shape</keyword>
<keyword id="KW-0961">Cell wall biogenesis/degradation</keyword>
<keyword id="KW-0963">Cytoplasm</keyword>
<keyword id="KW-0274">FAD</keyword>
<keyword id="KW-0285">Flavoprotein</keyword>
<keyword id="KW-0521">NADP</keyword>
<keyword id="KW-0560">Oxidoreductase</keyword>
<keyword id="KW-0573">Peptidoglycan synthesis</keyword>
<sequence>MNKNDILRGLESILPKDIIKVDEPLKRYTYTETGGEADFYLSPTKNEEVQAIVKFAHENSIPVTYLGNGSNIIIREGGIRGIVLSLLSLNHIETSDDAIIAGSGAAIIDVSNVARDHVLTGLEFACGIPGSIGGAVFMNAGAYGGEVKDCIDYALCVNEKGDLLKLTTAELELDYRNSVVQQKHLVVLEAAFTLEPGKLDEIQAKMDDLTERRESKQPLEFPSCGSVFQRPPGHFAGKLIQDSNLQGYRIGGVEVSTKHAGFMVNVDNGTATDYEALIHHVQKIVKEKFDVELNTEVRIIGDHPTD</sequence>
<comment type="function">
    <text evidence="1">Cell wall formation.</text>
</comment>
<comment type="catalytic activity">
    <reaction evidence="1">
        <text>UDP-N-acetyl-alpha-D-muramate + NADP(+) = UDP-N-acetyl-3-O-(1-carboxyvinyl)-alpha-D-glucosamine + NADPH + H(+)</text>
        <dbReference type="Rhea" id="RHEA:12248"/>
        <dbReference type="ChEBI" id="CHEBI:15378"/>
        <dbReference type="ChEBI" id="CHEBI:57783"/>
        <dbReference type="ChEBI" id="CHEBI:58349"/>
        <dbReference type="ChEBI" id="CHEBI:68483"/>
        <dbReference type="ChEBI" id="CHEBI:70757"/>
        <dbReference type="EC" id="1.3.1.98"/>
    </reaction>
</comment>
<comment type="cofactor">
    <cofactor evidence="1">
        <name>FAD</name>
        <dbReference type="ChEBI" id="CHEBI:57692"/>
    </cofactor>
</comment>
<comment type="pathway">
    <text evidence="1">Cell wall biogenesis; peptidoglycan biosynthesis.</text>
</comment>
<comment type="subcellular location">
    <subcellularLocation>
        <location evidence="1">Cytoplasm</location>
    </subcellularLocation>
</comment>
<comment type="similarity">
    <text evidence="1">Belongs to the MurB family.</text>
</comment>
<comment type="sequence caution" evidence="2">
    <conflict type="erroneous initiation">
        <sequence resource="EMBL-CDS" id="AAO04117"/>
    </conflict>
</comment>
<protein>
    <recommendedName>
        <fullName evidence="1">UDP-N-acetylenolpyruvoylglucosamine reductase</fullName>
        <ecNumber evidence="1">1.3.1.98</ecNumber>
    </recommendedName>
    <alternativeName>
        <fullName evidence="1">UDP-N-acetylmuramate dehydrogenase</fullName>
    </alternativeName>
</protein>
<evidence type="ECO:0000255" key="1">
    <source>
        <dbReference type="HAMAP-Rule" id="MF_00037"/>
    </source>
</evidence>
<evidence type="ECO:0000305" key="2"/>
<proteinExistence type="inferred from homology"/>
<gene>
    <name evidence="1" type="primary">murB</name>
    <name type="ordered locus">SE_0520</name>
</gene>